<feature type="signal peptide" evidence="2">
    <location>
        <begin position="1"/>
        <end position="24"/>
    </location>
</feature>
<feature type="chain" id="PRO_0000277508" description="Putative cysteine proteinase inhibitor 11">
    <location>
        <begin position="25"/>
        <end position="120"/>
    </location>
</feature>
<feature type="short sequence motif" description="Secondary area of contact" evidence="1">
    <location>
        <begin position="73"/>
        <end position="77"/>
    </location>
</feature>
<feature type="site" description="Reactive site" evidence="1">
    <location>
        <position position="28"/>
    </location>
</feature>
<name>CYT11_ORYSJ</name>
<keyword id="KW-0611">Plant defense</keyword>
<keyword id="KW-0646">Protease inhibitor</keyword>
<keyword id="KW-1185">Reference proteome</keyword>
<keyword id="KW-0964">Secreted</keyword>
<keyword id="KW-0732">Signal</keyword>
<keyword id="KW-0789">Thiol protease inhibitor</keyword>
<reference key="1">
    <citation type="journal article" date="2005" name="Nature">
        <title>The map-based sequence of the rice genome.</title>
        <authorList>
            <consortium name="International rice genome sequencing project (IRGSP)"/>
        </authorList>
    </citation>
    <scope>NUCLEOTIDE SEQUENCE [LARGE SCALE GENOMIC DNA]</scope>
    <source>
        <strain>cv. Nipponbare</strain>
    </source>
</reference>
<reference key="2">
    <citation type="journal article" date="2013" name="Rice">
        <title>Improvement of the Oryza sativa Nipponbare reference genome using next generation sequence and optical map data.</title>
        <authorList>
            <person name="Kawahara Y."/>
            <person name="de la Bastide M."/>
            <person name="Hamilton J.P."/>
            <person name="Kanamori H."/>
            <person name="McCombie W.R."/>
            <person name="Ouyang S."/>
            <person name="Schwartz D.C."/>
            <person name="Tanaka T."/>
            <person name="Wu J."/>
            <person name="Zhou S."/>
            <person name="Childs K.L."/>
            <person name="Davidson R.M."/>
            <person name="Lin H."/>
            <person name="Quesada-Ocampo L."/>
            <person name="Vaillancourt B."/>
            <person name="Sakai H."/>
            <person name="Lee S.S."/>
            <person name="Kim J."/>
            <person name="Numa H."/>
            <person name="Itoh T."/>
            <person name="Buell C.R."/>
            <person name="Matsumoto T."/>
        </authorList>
    </citation>
    <scope>GENOME REANNOTATION</scope>
    <source>
        <strain>cv. Nipponbare</strain>
    </source>
</reference>
<reference key="3">
    <citation type="journal article" date="2005" name="PLoS Biol.">
        <title>The genomes of Oryza sativa: a history of duplications.</title>
        <authorList>
            <person name="Yu J."/>
            <person name="Wang J."/>
            <person name="Lin W."/>
            <person name="Li S."/>
            <person name="Li H."/>
            <person name="Zhou J."/>
            <person name="Ni P."/>
            <person name="Dong W."/>
            <person name="Hu S."/>
            <person name="Zeng C."/>
            <person name="Zhang J."/>
            <person name="Zhang Y."/>
            <person name="Li R."/>
            <person name="Xu Z."/>
            <person name="Li S."/>
            <person name="Li X."/>
            <person name="Zheng H."/>
            <person name="Cong L."/>
            <person name="Lin L."/>
            <person name="Yin J."/>
            <person name="Geng J."/>
            <person name="Li G."/>
            <person name="Shi J."/>
            <person name="Liu J."/>
            <person name="Lv H."/>
            <person name="Li J."/>
            <person name="Wang J."/>
            <person name="Deng Y."/>
            <person name="Ran L."/>
            <person name="Shi X."/>
            <person name="Wang X."/>
            <person name="Wu Q."/>
            <person name="Li C."/>
            <person name="Ren X."/>
            <person name="Wang J."/>
            <person name="Wang X."/>
            <person name="Li D."/>
            <person name="Liu D."/>
            <person name="Zhang X."/>
            <person name="Ji Z."/>
            <person name="Zhao W."/>
            <person name="Sun Y."/>
            <person name="Zhang Z."/>
            <person name="Bao J."/>
            <person name="Han Y."/>
            <person name="Dong L."/>
            <person name="Ji J."/>
            <person name="Chen P."/>
            <person name="Wu S."/>
            <person name="Liu J."/>
            <person name="Xiao Y."/>
            <person name="Bu D."/>
            <person name="Tan J."/>
            <person name="Yang L."/>
            <person name="Ye C."/>
            <person name="Zhang J."/>
            <person name="Xu J."/>
            <person name="Zhou Y."/>
            <person name="Yu Y."/>
            <person name="Zhang B."/>
            <person name="Zhuang S."/>
            <person name="Wei H."/>
            <person name="Liu B."/>
            <person name="Lei M."/>
            <person name="Yu H."/>
            <person name="Li Y."/>
            <person name="Xu H."/>
            <person name="Wei S."/>
            <person name="He X."/>
            <person name="Fang L."/>
            <person name="Zhang Z."/>
            <person name="Zhang Y."/>
            <person name="Huang X."/>
            <person name="Su Z."/>
            <person name="Tong W."/>
            <person name="Li J."/>
            <person name="Tong Z."/>
            <person name="Li S."/>
            <person name="Ye J."/>
            <person name="Wang L."/>
            <person name="Fang L."/>
            <person name="Lei T."/>
            <person name="Chen C.-S."/>
            <person name="Chen H.-C."/>
            <person name="Xu Z."/>
            <person name="Li H."/>
            <person name="Huang H."/>
            <person name="Zhang F."/>
            <person name="Xu H."/>
            <person name="Li N."/>
            <person name="Zhao C."/>
            <person name="Li S."/>
            <person name="Dong L."/>
            <person name="Huang Y."/>
            <person name="Li L."/>
            <person name="Xi Y."/>
            <person name="Qi Q."/>
            <person name="Li W."/>
            <person name="Zhang B."/>
            <person name="Hu W."/>
            <person name="Zhang Y."/>
            <person name="Tian X."/>
            <person name="Jiao Y."/>
            <person name="Liang X."/>
            <person name="Jin J."/>
            <person name="Gao L."/>
            <person name="Zheng W."/>
            <person name="Hao B."/>
            <person name="Liu S.-M."/>
            <person name="Wang W."/>
            <person name="Yuan L."/>
            <person name="Cao M."/>
            <person name="McDermott J."/>
            <person name="Samudrala R."/>
            <person name="Wang J."/>
            <person name="Wong G.K.-S."/>
            <person name="Yang H."/>
        </authorList>
    </citation>
    <scope>NUCLEOTIDE SEQUENCE [LARGE SCALE GENOMIC DNA]</scope>
    <source>
        <strain>cv. Nipponbare</strain>
    </source>
</reference>
<reference key="4">
    <citation type="journal article" date="2005" name="Mol. Genet. Genomics">
        <title>Comparative phylogenetic analysis of cystatin gene families from arabidopsis, rice and barley.</title>
        <authorList>
            <person name="Martinez M."/>
            <person name="Abraham Z."/>
            <person name="Carbonero P."/>
            <person name="Diaz I."/>
        </authorList>
    </citation>
    <scope>GENE FAMILY</scope>
</reference>
<accession>Q6K309</accession>
<accession>A3BWJ2</accession>
<sequence>MARHPGLLLILLAAVAAVATTSRAQWVGGWNVIEDVAGNNQIQRVGAWAVGKHNQLGTNDRLQFVRVVAAEEQVVQGSNYLVVIDAASSRKKTRELYVAVVADLVGATTYQLSSFKLATK</sequence>
<gene>
    <name type="ordered locus">Os09g0255200</name>
    <name type="ordered locus">LOC_Os09g08100</name>
    <name evidence="4" type="ORF">OsJ_28554</name>
    <name type="ORF">OSJNBb0066C12.33</name>
</gene>
<evidence type="ECO:0000250" key="1"/>
<evidence type="ECO:0000255" key="2"/>
<evidence type="ECO:0000305" key="3"/>
<evidence type="ECO:0000312" key="4">
    <source>
        <dbReference type="EMBL" id="EAZ43931.1"/>
    </source>
</evidence>
<organism>
    <name type="scientific">Oryza sativa subsp. japonica</name>
    <name type="common">Rice</name>
    <dbReference type="NCBI Taxonomy" id="39947"/>
    <lineage>
        <taxon>Eukaryota</taxon>
        <taxon>Viridiplantae</taxon>
        <taxon>Streptophyta</taxon>
        <taxon>Embryophyta</taxon>
        <taxon>Tracheophyta</taxon>
        <taxon>Spermatophyta</taxon>
        <taxon>Magnoliopsida</taxon>
        <taxon>Liliopsida</taxon>
        <taxon>Poales</taxon>
        <taxon>Poaceae</taxon>
        <taxon>BOP clade</taxon>
        <taxon>Oryzoideae</taxon>
        <taxon>Oryzeae</taxon>
        <taxon>Oryzinae</taxon>
        <taxon>Oryza</taxon>
        <taxon>Oryza sativa</taxon>
    </lineage>
</organism>
<comment type="function">
    <text evidence="1">Specific inhibitor of cysteine proteinases. Probably involved in the regulation of endogenous processes and in defense against pests and pathogens (By similarity).</text>
</comment>
<comment type="subcellular location">
    <subcellularLocation>
        <location evidence="3">Secreted</location>
    </subcellularLocation>
</comment>
<comment type="similarity">
    <text evidence="3">Belongs to the cystatin family. Phytocystatin subfamily.</text>
</comment>
<dbReference type="EMBL" id="AP005738">
    <property type="protein sequence ID" value="BAD23561.1"/>
    <property type="molecule type" value="Genomic_DNA"/>
</dbReference>
<dbReference type="EMBL" id="AP014965">
    <property type="protein sequence ID" value="BAT07073.1"/>
    <property type="molecule type" value="Genomic_DNA"/>
</dbReference>
<dbReference type="EMBL" id="CM000146">
    <property type="protein sequence ID" value="EAZ43931.1"/>
    <property type="molecule type" value="Genomic_DNA"/>
</dbReference>
<dbReference type="SMR" id="Q6K309"/>
<dbReference type="STRING" id="39947.Q6K309"/>
<dbReference type="PaxDb" id="39947-Q6K309"/>
<dbReference type="EnsemblPlants" id="Os09t0255200-00">
    <property type="protein sequence ID" value="Os09t0255200-00"/>
    <property type="gene ID" value="Os09g0255200"/>
</dbReference>
<dbReference type="GeneID" id="107277615"/>
<dbReference type="Gramene" id="Os09t0255200-00">
    <property type="protein sequence ID" value="Os09t0255200-00"/>
    <property type="gene ID" value="Os09g0255200"/>
</dbReference>
<dbReference type="KEGG" id="osa:107277615"/>
<dbReference type="HOGENOM" id="CLU_113093_2_2_1"/>
<dbReference type="InParanoid" id="Q6K309"/>
<dbReference type="OrthoDB" id="10310956at2759"/>
<dbReference type="Proteomes" id="UP000000763">
    <property type="component" value="Chromosome 9"/>
</dbReference>
<dbReference type="Proteomes" id="UP000007752">
    <property type="component" value="Chromosome 9"/>
</dbReference>
<dbReference type="Proteomes" id="UP000059680">
    <property type="component" value="Chromosome 9"/>
</dbReference>
<dbReference type="GO" id="GO:0005576">
    <property type="term" value="C:extracellular region"/>
    <property type="evidence" value="ECO:0007669"/>
    <property type="project" value="UniProtKB-SubCell"/>
</dbReference>
<dbReference type="GO" id="GO:0004869">
    <property type="term" value="F:cysteine-type endopeptidase inhibitor activity"/>
    <property type="evidence" value="ECO:0007669"/>
    <property type="project" value="UniProtKB-KW"/>
</dbReference>
<dbReference type="GO" id="GO:0006952">
    <property type="term" value="P:defense response"/>
    <property type="evidence" value="ECO:0007669"/>
    <property type="project" value="UniProtKB-KW"/>
</dbReference>
<dbReference type="CDD" id="cd00042">
    <property type="entry name" value="CY"/>
    <property type="match status" value="1"/>
</dbReference>
<dbReference type="Gene3D" id="3.10.450.10">
    <property type="match status" value="1"/>
</dbReference>
<dbReference type="InterPro" id="IPR027214">
    <property type="entry name" value="Cystatin"/>
</dbReference>
<dbReference type="InterPro" id="IPR000010">
    <property type="entry name" value="Cystatin_dom"/>
</dbReference>
<dbReference type="InterPro" id="IPR046350">
    <property type="entry name" value="Cystatin_sf"/>
</dbReference>
<dbReference type="InterPro" id="IPR018073">
    <property type="entry name" value="Prot_inh_cystat_CS"/>
</dbReference>
<dbReference type="PANTHER" id="PTHR47116">
    <property type="entry name" value="PHLOEM FILAMENT PROTEIN"/>
    <property type="match status" value="1"/>
</dbReference>
<dbReference type="Pfam" id="PF16845">
    <property type="entry name" value="SQAPI"/>
    <property type="match status" value="1"/>
</dbReference>
<dbReference type="SUPFAM" id="SSF54403">
    <property type="entry name" value="Cystatin/monellin"/>
    <property type="match status" value="1"/>
</dbReference>
<dbReference type="PROSITE" id="PS00287">
    <property type="entry name" value="CYSTATIN"/>
    <property type="match status" value="1"/>
</dbReference>
<proteinExistence type="inferred from homology"/>
<protein>
    <recommendedName>
        <fullName>Putative cysteine proteinase inhibitor 11</fullName>
    </recommendedName>
    <alternativeName>
        <fullName>Oryzacystatin XI</fullName>
        <shortName>OC-XI</shortName>
    </alternativeName>
    <alternativeName>
        <fullName>Oryzacystatin-11</fullName>
    </alternativeName>
</protein>